<protein>
    <recommendedName>
        <fullName>Protein ARV1</fullName>
    </recommendedName>
</protein>
<sequence>MICITCMRPVDSLYTVYSNDHIQLTDCPYCQETVDKYVEIDNVLLFIDLLLLKAGAYRHLVFNALELHLSKYPKRKALNDCQCLRDYTQALLFNVKNWFCKYDRLNRLWLLLLSFEIYLTWVTEESKYIYYLNRNNNDGKLIMLSKKLPESFKWDSAIMRNTITSKVFTWSPPIQYLYFASYCILDVSLFHTFTQYFILKKLHWKHYSVSSKDVISYTILLSYGAKIFPILMLIWPYDTLISMSIIKWVANLYIIESLKIVTNLSYWNIIKIFISVSLLRYFMVKPILIVFVAKFNFSVIKNLIHQEFILLLQKSGTYLLL</sequence>
<name>ARV1_YEAST</name>
<accession>Q06541</accession>
<accession>D6VYP0</accession>
<accession>Q2VQX3</accession>
<proteinExistence type="evidence at transcript level"/>
<evidence type="ECO:0000255" key="1"/>
<evidence type="ECO:0000269" key="2">
    <source>
    </source>
</evidence>
<evidence type="ECO:0000269" key="3">
    <source>
    </source>
</evidence>
<evidence type="ECO:0000305" key="4"/>
<keyword id="KW-0256">Endoplasmic reticulum</keyword>
<keyword id="KW-0325">Glycoprotein</keyword>
<keyword id="KW-0333">Golgi apparatus</keyword>
<keyword id="KW-0443">Lipid metabolism</keyword>
<keyword id="KW-0445">Lipid transport</keyword>
<keyword id="KW-0472">Membrane</keyword>
<keyword id="KW-1185">Reference proteome</keyword>
<keyword id="KW-0746">Sphingolipid metabolism</keyword>
<keyword id="KW-0812">Transmembrane</keyword>
<keyword id="KW-1133">Transmembrane helix</keyword>
<keyword id="KW-0813">Transport</keyword>
<reference key="1">
    <citation type="journal article" date="1997" name="Nature">
        <title>The nucleotide sequence of Saccharomyces cerevisiae chromosome XII.</title>
        <authorList>
            <person name="Johnston M."/>
            <person name="Hillier L.W."/>
            <person name="Riles L."/>
            <person name="Albermann K."/>
            <person name="Andre B."/>
            <person name="Ansorge W."/>
            <person name="Benes V."/>
            <person name="Brueckner M."/>
            <person name="Delius H."/>
            <person name="Dubois E."/>
            <person name="Duesterhoeft A."/>
            <person name="Entian K.-D."/>
            <person name="Floeth M."/>
            <person name="Goffeau A."/>
            <person name="Hebling U."/>
            <person name="Heumann K."/>
            <person name="Heuss-Neitzel D."/>
            <person name="Hilbert H."/>
            <person name="Hilger F."/>
            <person name="Kleine K."/>
            <person name="Koetter P."/>
            <person name="Louis E.J."/>
            <person name="Messenguy F."/>
            <person name="Mewes H.-W."/>
            <person name="Miosga T."/>
            <person name="Moestl D."/>
            <person name="Mueller-Auer S."/>
            <person name="Nentwich U."/>
            <person name="Obermaier B."/>
            <person name="Piravandi E."/>
            <person name="Pohl T.M."/>
            <person name="Portetelle D."/>
            <person name="Purnelle B."/>
            <person name="Rechmann S."/>
            <person name="Rieger M."/>
            <person name="Rinke M."/>
            <person name="Rose M."/>
            <person name="Scharfe M."/>
            <person name="Scherens B."/>
            <person name="Scholler P."/>
            <person name="Schwager C."/>
            <person name="Schwarz S."/>
            <person name="Underwood A.P."/>
            <person name="Urrestarazu L.A."/>
            <person name="Vandenbol M."/>
            <person name="Verhasselt P."/>
            <person name="Vierendeels F."/>
            <person name="Voet M."/>
            <person name="Volckaert G."/>
            <person name="Voss H."/>
            <person name="Wambutt R."/>
            <person name="Wedler E."/>
            <person name="Wedler H."/>
            <person name="Zimmermann F.K."/>
            <person name="Zollner A."/>
            <person name="Hani J."/>
            <person name="Hoheisel J.D."/>
        </authorList>
    </citation>
    <scope>NUCLEOTIDE SEQUENCE [LARGE SCALE GENOMIC DNA]</scope>
    <source>
        <strain>ATCC 204508 / S288c</strain>
    </source>
</reference>
<reference key="2">
    <citation type="journal article" date="2014" name="G3 (Bethesda)">
        <title>The reference genome sequence of Saccharomyces cerevisiae: Then and now.</title>
        <authorList>
            <person name="Engel S.R."/>
            <person name="Dietrich F.S."/>
            <person name="Fisk D.G."/>
            <person name="Binkley G."/>
            <person name="Balakrishnan R."/>
            <person name="Costanzo M.C."/>
            <person name="Dwight S.S."/>
            <person name="Hitz B.C."/>
            <person name="Karra K."/>
            <person name="Nash R.S."/>
            <person name="Weng S."/>
            <person name="Wong E.D."/>
            <person name="Lloyd P."/>
            <person name="Skrzypek M.S."/>
            <person name="Miyasato S.R."/>
            <person name="Simison M."/>
            <person name="Cherry J.M."/>
        </authorList>
    </citation>
    <scope>GENOME REANNOTATION</scope>
    <source>
        <strain>ATCC 204508 / S288c</strain>
    </source>
</reference>
<reference key="3">
    <citation type="journal article" date="2007" name="Genome Res.">
        <title>Approaching a complete repository of sequence-verified protein-encoding clones for Saccharomyces cerevisiae.</title>
        <authorList>
            <person name="Hu Y."/>
            <person name="Rolfs A."/>
            <person name="Bhullar B."/>
            <person name="Murthy T.V.S."/>
            <person name="Zhu C."/>
            <person name="Berger M.F."/>
            <person name="Camargo A.A."/>
            <person name="Kelley F."/>
            <person name="McCarron S."/>
            <person name="Jepson D."/>
            <person name="Richardson A."/>
            <person name="Raphael J."/>
            <person name="Moreira D."/>
            <person name="Taycher E."/>
            <person name="Zuo D."/>
            <person name="Mohr S."/>
            <person name="Kane M.F."/>
            <person name="Williamson J."/>
            <person name="Simpson A.J.G."/>
            <person name="Bulyk M.L."/>
            <person name="Harlow E."/>
            <person name="Marsischky G."/>
            <person name="Kolodner R.D."/>
            <person name="LaBaer J."/>
        </authorList>
    </citation>
    <scope>NUCLEOTIDE SEQUENCE [GENOMIC DNA]</scope>
    <source>
        <strain>ATCC 204508 / S288c</strain>
    </source>
</reference>
<reference key="4">
    <citation type="journal article" date="2005" name="Curr. Genet.">
        <title>Identification and characterization of upstream open reading frames (uORF) in the 5' untranslated regions (UTR) of genes in Saccharomyces cerevisiae.</title>
        <authorList>
            <person name="Zhang Z."/>
            <person name="Dietrich F.S."/>
        </authorList>
    </citation>
    <scope>NUCLEOTIDE SEQUENCE [MRNA] OF 1-81</scope>
    <source>
        <strain>ATCC 208353 / W303-1A</strain>
    </source>
</reference>
<reference key="5">
    <citation type="journal article" date="2000" name="J. Biol. Chem.">
        <title>Mutations in yeast ARV1 alter intracellular sterol distribution and are complemented by human ARV1.</title>
        <authorList>
            <person name="Tinkelenberg A.H."/>
            <person name="Liu Y."/>
            <person name="Alcantara F."/>
            <person name="Khan S."/>
            <person name="Guo Z."/>
            <person name="Bard M."/>
            <person name="Sturley S.L."/>
        </authorList>
    </citation>
    <scope>FUNCTION</scope>
</reference>
<reference key="6">
    <citation type="journal article" date="2002" name="J. Biol. Chem.">
        <title>Yeast cells lacking the ARV1 gene harbor defects in sphingolipid metabolism. Complementation by human ARV1.</title>
        <authorList>
            <person name="Swain E."/>
            <person name="Stukey J."/>
            <person name="McDonough V."/>
            <person name="Germann M."/>
            <person name="Liu Y."/>
            <person name="Sturley S.L."/>
            <person name="Nickels J.T. Jr."/>
        </authorList>
    </citation>
    <scope>FUNCTION</scope>
    <scope>SUBCELLULAR LOCATION</scope>
</reference>
<dbReference type="EMBL" id="U20865">
    <property type="protein sequence ID" value="AAB67397.1"/>
    <property type="molecule type" value="Genomic_DNA"/>
</dbReference>
<dbReference type="EMBL" id="AY692846">
    <property type="protein sequence ID" value="AAT92865.1"/>
    <property type="molecule type" value="Genomic_DNA"/>
</dbReference>
<dbReference type="EMBL" id="AY899245">
    <property type="protein sequence ID" value="AAX83930.1"/>
    <property type="molecule type" value="mRNA"/>
</dbReference>
<dbReference type="EMBL" id="BK006945">
    <property type="protein sequence ID" value="DAA09556.1"/>
    <property type="molecule type" value="Genomic_DNA"/>
</dbReference>
<dbReference type="PIR" id="S59388">
    <property type="entry name" value="S59388"/>
</dbReference>
<dbReference type="RefSeq" id="NP_013343.1">
    <property type="nucleotide sequence ID" value="NM_001182129.1"/>
</dbReference>
<dbReference type="BioGRID" id="31509">
    <property type="interactions" value="521"/>
</dbReference>
<dbReference type="DIP" id="DIP-5171N"/>
<dbReference type="FunCoup" id="Q06541">
    <property type="interactions" value="52"/>
</dbReference>
<dbReference type="IntAct" id="Q06541">
    <property type="interactions" value="2"/>
</dbReference>
<dbReference type="MINT" id="Q06541"/>
<dbReference type="STRING" id="4932.YLR242C"/>
<dbReference type="TCDB" id="9.A.19.1.1">
    <property type="family name" value="the lipid intermediate transporter (arv1) family"/>
</dbReference>
<dbReference type="GlyCosmos" id="Q06541">
    <property type="glycosylation" value="1 site, No reported glycans"/>
</dbReference>
<dbReference type="GlyGen" id="Q06541">
    <property type="glycosylation" value="1 site"/>
</dbReference>
<dbReference type="PaxDb" id="4932-YLR242C"/>
<dbReference type="PeptideAtlas" id="Q06541"/>
<dbReference type="EnsemblFungi" id="YLR242C_mRNA">
    <property type="protein sequence ID" value="YLR242C"/>
    <property type="gene ID" value="YLR242C"/>
</dbReference>
<dbReference type="GeneID" id="850943"/>
<dbReference type="KEGG" id="sce:YLR242C"/>
<dbReference type="AGR" id="SGD:S000004232"/>
<dbReference type="SGD" id="S000004232">
    <property type="gene designation" value="ARV1"/>
</dbReference>
<dbReference type="VEuPathDB" id="FungiDB:YLR242C"/>
<dbReference type="eggNOG" id="KOG3134">
    <property type="taxonomic scope" value="Eukaryota"/>
</dbReference>
<dbReference type="GeneTree" id="ENSGT00390000002675"/>
<dbReference type="HOGENOM" id="CLU_057366_2_0_1"/>
<dbReference type="InParanoid" id="Q06541"/>
<dbReference type="OMA" id="MLDMNVK"/>
<dbReference type="OrthoDB" id="2192830at2759"/>
<dbReference type="BioCyc" id="YEAST:G3O-32349-MONOMER"/>
<dbReference type="Reactome" id="R-SCE-191273">
    <property type="pathway name" value="Cholesterol biosynthesis"/>
</dbReference>
<dbReference type="BioGRID-ORCS" id="850943">
    <property type="hits" value="0 hits in 10 CRISPR screens"/>
</dbReference>
<dbReference type="PRO" id="PR:Q06541"/>
<dbReference type="Proteomes" id="UP000002311">
    <property type="component" value="Chromosome XII"/>
</dbReference>
<dbReference type="RNAct" id="Q06541">
    <property type="molecule type" value="protein"/>
</dbReference>
<dbReference type="GO" id="GO:0032541">
    <property type="term" value="C:cortical endoplasmic reticulum"/>
    <property type="evidence" value="ECO:0000314"/>
    <property type="project" value="SGD"/>
</dbReference>
<dbReference type="GO" id="GO:0005783">
    <property type="term" value="C:endoplasmic reticulum"/>
    <property type="evidence" value="ECO:0000314"/>
    <property type="project" value="SGD"/>
</dbReference>
<dbReference type="GO" id="GO:0005789">
    <property type="term" value="C:endoplasmic reticulum membrane"/>
    <property type="evidence" value="ECO:0007669"/>
    <property type="project" value="UniProtKB-SubCell"/>
</dbReference>
<dbReference type="GO" id="GO:0005794">
    <property type="term" value="C:Golgi apparatus"/>
    <property type="evidence" value="ECO:0000314"/>
    <property type="project" value="SGD"/>
</dbReference>
<dbReference type="GO" id="GO:0000139">
    <property type="term" value="C:Golgi membrane"/>
    <property type="evidence" value="ECO:0007669"/>
    <property type="project" value="UniProtKB-SubCell"/>
</dbReference>
<dbReference type="GO" id="GO:0006897">
    <property type="term" value="P:endocytosis"/>
    <property type="evidence" value="ECO:0000315"/>
    <property type="project" value="SGD"/>
</dbReference>
<dbReference type="GO" id="GO:0035621">
    <property type="term" value="P:ER to Golgi ceramide transport"/>
    <property type="evidence" value="ECO:0000315"/>
    <property type="project" value="SGD"/>
</dbReference>
<dbReference type="GO" id="GO:0006506">
    <property type="term" value="P:GPI anchor biosynthetic process"/>
    <property type="evidence" value="ECO:0000315"/>
    <property type="project" value="SGD"/>
</dbReference>
<dbReference type="GO" id="GO:0032366">
    <property type="term" value="P:intracellular sterol transport"/>
    <property type="evidence" value="ECO:0000315"/>
    <property type="project" value="SGD"/>
</dbReference>
<dbReference type="GO" id="GO:0097036">
    <property type="term" value="P:regulation of plasma membrane sterol distribution"/>
    <property type="evidence" value="ECO:0000315"/>
    <property type="project" value="SGD"/>
</dbReference>
<dbReference type="GO" id="GO:0030148">
    <property type="term" value="P:sphingolipid biosynthetic process"/>
    <property type="evidence" value="ECO:0000315"/>
    <property type="project" value="SGD"/>
</dbReference>
<dbReference type="GO" id="GO:0006665">
    <property type="term" value="P:sphingolipid metabolic process"/>
    <property type="evidence" value="ECO:0000318"/>
    <property type="project" value="GO_Central"/>
</dbReference>
<dbReference type="GO" id="GO:0035376">
    <property type="term" value="P:sterol import"/>
    <property type="evidence" value="ECO:0000315"/>
    <property type="project" value="SGD"/>
</dbReference>
<dbReference type="GO" id="GO:0016125">
    <property type="term" value="P:sterol metabolic process"/>
    <property type="evidence" value="ECO:0000318"/>
    <property type="project" value="GO_Central"/>
</dbReference>
<dbReference type="InterPro" id="IPR007290">
    <property type="entry name" value="Arv1"/>
</dbReference>
<dbReference type="PANTHER" id="PTHR14467">
    <property type="entry name" value="ARV1"/>
    <property type="match status" value="1"/>
</dbReference>
<dbReference type="PANTHER" id="PTHR14467:SF0">
    <property type="entry name" value="PROTEIN ARV1"/>
    <property type="match status" value="1"/>
</dbReference>
<dbReference type="Pfam" id="PF04161">
    <property type="entry name" value="Arv1"/>
    <property type="match status" value="1"/>
</dbReference>
<comment type="function">
    <text evidence="2 3">Mediator of sterol homeostasis involved in sterol uptake, trafficking and distribution into membranes. Also regulates the sphingolipid metabolism. Required for growth during anaerobiosis and sterol uptake.</text>
</comment>
<comment type="subcellular location">
    <subcellularLocation>
        <location evidence="3">Endoplasmic reticulum membrane</location>
        <topology evidence="3">Multi-pass membrane protein</topology>
    </subcellularLocation>
    <subcellularLocation>
        <location evidence="3">Golgi apparatus membrane</location>
        <topology evidence="3">Multi-pass membrane protein</topology>
    </subcellularLocation>
</comment>
<comment type="similarity">
    <text evidence="4">Belongs to the ARV1 family.</text>
</comment>
<feature type="chain" id="PRO_0000228135" description="Protein ARV1">
    <location>
        <begin position="1"/>
        <end position="321"/>
    </location>
</feature>
<feature type="transmembrane region" description="Helical" evidence="1">
    <location>
        <begin position="179"/>
        <end position="199"/>
    </location>
</feature>
<feature type="transmembrane region" description="Helical" evidence="1">
    <location>
        <begin position="214"/>
        <end position="234"/>
    </location>
</feature>
<feature type="transmembrane region" description="Helical" evidence="1">
    <location>
        <begin position="248"/>
        <end position="270"/>
    </location>
</feature>
<feature type="transmembrane region" description="Helical" evidence="1">
    <location>
        <begin position="272"/>
        <end position="292"/>
    </location>
</feature>
<feature type="glycosylation site" description="N-linked (GlcNAc...) asparagine" evidence="1">
    <location>
        <position position="296"/>
    </location>
</feature>
<gene>
    <name type="primary">ARV1</name>
    <name type="ordered locus">YLR242C</name>
</gene>
<organism>
    <name type="scientific">Saccharomyces cerevisiae (strain ATCC 204508 / S288c)</name>
    <name type="common">Baker's yeast</name>
    <dbReference type="NCBI Taxonomy" id="559292"/>
    <lineage>
        <taxon>Eukaryota</taxon>
        <taxon>Fungi</taxon>
        <taxon>Dikarya</taxon>
        <taxon>Ascomycota</taxon>
        <taxon>Saccharomycotina</taxon>
        <taxon>Saccharomycetes</taxon>
        <taxon>Saccharomycetales</taxon>
        <taxon>Saccharomycetaceae</taxon>
        <taxon>Saccharomyces</taxon>
    </lineage>
</organism>